<dbReference type="EC" id="2.1.2.11" evidence="1"/>
<dbReference type="EMBL" id="CP000046">
    <property type="protein sequence ID" value="AAW38614.1"/>
    <property type="molecule type" value="Genomic_DNA"/>
</dbReference>
<dbReference type="RefSeq" id="WP_000860042.1">
    <property type="nucleotide sequence ID" value="NC_002951.2"/>
</dbReference>
<dbReference type="SMR" id="Q5HCV3"/>
<dbReference type="KEGG" id="sac:SACOL2615"/>
<dbReference type="HOGENOM" id="CLU_036645_1_0_9"/>
<dbReference type="UniPathway" id="UPA00028">
    <property type="reaction ID" value="UER00003"/>
</dbReference>
<dbReference type="Proteomes" id="UP000000530">
    <property type="component" value="Chromosome"/>
</dbReference>
<dbReference type="GO" id="GO:0005737">
    <property type="term" value="C:cytoplasm"/>
    <property type="evidence" value="ECO:0007669"/>
    <property type="project" value="UniProtKB-SubCell"/>
</dbReference>
<dbReference type="GO" id="GO:0003864">
    <property type="term" value="F:3-methyl-2-oxobutanoate hydroxymethyltransferase activity"/>
    <property type="evidence" value="ECO:0007669"/>
    <property type="project" value="UniProtKB-UniRule"/>
</dbReference>
<dbReference type="GO" id="GO:0000287">
    <property type="term" value="F:magnesium ion binding"/>
    <property type="evidence" value="ECO:0007669"/>
    <property type="project" value="TreeGrafter"/>
</dbReference>
<dbReference type="GO" id="GO:0015940">
    <property type="term" value="P:pantothenate biosynthetic process"/>
    <property type="evidence" value="ECO:0007669"/>
    <property type="project" value="UniProtKB-UniRule"/>
</dbReference>
<dbReference type="CDD" id="cd06557">
    <property type="entry name" value="KPHMT-like"/>
    <property type="match status" value="1"/>
</dbReference>
<dbReference type="FunFam" id="3.20.20.60:FF:000030">
    <property type="entry name" value="3-methyl-2-oxobutanoate hydroxymethyltransferase"/>
    <property type="match status" value="1"/>
</dbReference>
<dbReference type="Gene3D" id="3.20.20.60">
    <property type="entry name" value="Phosphoenolpyruvate-binding domains"/>
    <property type="match status" value="1"/>
</dbReference>
<dbReference type="HAMAP" id="MF_00156">
    <property type="entry name" value="PanB"/>
    <property type="match status" value="1"/>
</dbReference>
<dbReference type="InterPro" id="IPR003700">
    <property type="entry name" value="Pantoate_hydroxy_MeTrfase"/>
</dbReference>
<dbReference type="InterPro" id="IPR015813">
    <property type="entry name" value="Pyrv/PenolPyrv_kinase-like_dom"/>
</dbReference>
<dbReference type="InterPro" id="IPR040442">
    <property type="entry name" value="Pyrv_kinase-like_dom_sf"/>
</dbReference>
<dbReference type="NCBIfam" id="TIGR00222">
    <property type="entry name" value="panB"/>
    <property type="match status" value="1"/>
</dbReference>
<dbReference type="NCBIfam" id="NF001452">
    <property type="entry name" value="PRK00311.1"/>
    <property type="match status" value="1"/>
</dbReference>
<dbReference type="PANTHER" id="PTHR20881">
    <property type="entry name" value="3-METHYL-2-OXOBUTANOATE HYDROXYMETHYLTRANSFERASE"/>
    <property type="match status" value="1"/>
</dbReference>
<dbReference type="PANTHER" id="PTHR20881:SF0">
    <property type="entry name" value="3-METHYL-2-OXOBUTANOATE HYDROXYMETHYLTRANSFERASE"/>
    <property type="match status" value="1"/>
</dbReference>
<dbReference type="Pfam" id="PF02548">
    <property type="entry name" value="Pantoate_transf"/>
    <property type="match status" value="1"/>
</dbReference>
<dbReference type="PIRSF" id="PIRSF000388">
    <property type="entry name" value="Pantoate_hydroxy_MeTrfase"/>
    <property type="match status" value="1"/>
</dbReference>
<dbReference type="SUPFAM" id="SSF51621">
    <property type="entry name" value="Phosphoenolpyruvate/pyruvate domain"/>
    <property type="match status" value="1"/>
</dbReference>
<proteinExistence type="inferred from homology"/>
<protein>
    <recommendedName>
        <fullName evidence="1">3-methyl-2-oxobutanoate hydroxymethyltransferase</fullName>
        <ecNumber evidence="1">2.1.2.11</ecNumber>
    </recommendedName>
    <alternativeName>
        <fullName evidence="1">Ketopantoate hydroxymethyltransferase</fullName>
        <shortName evidence="1">KPHMT</shortName>
    </alternativeName>
</protein>
<accession>Q5HCV3</accession>
<keyword id="KW-0963">Cytoplasm</keyword>
<keyword id="KW-0460">Magnesium</keyword>
<keyword id="KW-0479">Metal-binding</keyword>
<keyword id="KW-0566">Pantothenate biosynthesis</keyword>
<keyword id="KW-0808">Transferase</keyword>
<sequence length="272" mass="29257">MKTVSQLIDMKQKETKISMVTAYDFPSAKQVEAAGIDMILVGDSLGMTVLGYESTVQVTLADMIHHGRAVRRGAPNTFVVVDMPIGAVGISMTQDLNHALKLYQETNANAIKAEGAHITPFIEKATAIGIPVVAHLGLTPQSVGVMGYKLQGATKEAAEQLILDAKNVEQAGAVALVLEAIPNDLAEEISKHLTIPVIGIGAGKGTDGQVLVYHDMLNYGVEHKAKFVKQFADFSVGVDGLKQYDQEVKSGAFPSEEYTYKKKIMNEVNNND</sequence>
<feature type="chain" id="PRO_0000184888" description="3-methyl-2-oxobutanoate hydroxymethyltransferase">
    <location>
        <begin position="1"/>
        <end position="272"/>
    </location>
</feature>
<feature type="active site" description="Proton acceptor" evidence="1">
    <location>
        <position position="179"/>
    </location>
</feature>
<feature type="binding site" evidence="1">
    <location>
        <begin position="43"/>
        <end position="44"/>
    </location>
    <ligand>
        <name>3-methyl-2-oxobutanoate</name>
        <dbReference type="ChEBI" id="CHEBI:11851"/>
    </ligand>
</feature>
<feature type="binding site" evidence="1">
    <location>
        <position position="43"/>
    </location>
    <ligand>
        <name>Mg(2+)</name>
        <dbReference type="ChEBI" id="CHEBI:18420"/>
    </ligand>
</feature>
<feature type="binding site" evidence="1">
    <location>
        <position position="82"/>
    </location>
    <ligand>
        <name>3-methyl-2-oxobutanoate</name>
        <dbReference type="ChEBI" id="CHEBI:11851"/>
    </ligand>
</feature>
<feature type="binding site" evidence="1">
    <location>
        <position position="82"/>
    </location>
    <ligand>
        <name>Mg(2+)</name>
        <dbReference type="ChEBI" id="CHEBI:18420"/>
    </ligand>
</feature>
<feature type="binding site" evidence="1">
    <location>
        <position position="112"/>
    </location>
    <ligand>
        <name>3-methyl-2-oxobutanoate</name>
        <dbReference type="ChEBI" id="CHEBI:11851"/>
    </ligand>
</feature>
<feature type="binding site" evidence="1">
    <location>
        <position position="114"/>
    </location>
    <ligand>
        <name>Mg(2+)</name>
        <dbReference type="ChEBI" id="CHEBI:18420"/>
    </ligand>
</feature>
<comment type="function">
    <text evidence="1">Catalyzes the reversible reaction in which hydroxymethyl group from 5,10-methylenetetrahydrofolate is transferred onto alpha-ketoisovalerate to form ketopantoate.</text>
</comment>
<comment type="catalytic activity">
    <reaction evidence="1">
        <text>3-methyl-2-oxobutanoate + (6R)-5,10-methylene-5,6,7,8-tetrahydrofolate + H2O = 2-dehydropantoate + (6S)-5,6,7,8-tetrahydrofolate</text>
        <dbReference type="Rhea" id="RHEA:11824"/>
        <dbReference type="ChEBI" id="CHEBI:11561"/>
        <dbReference type="ChEBI" id="CHEBI:11851"/>
        <dbReference type="ChEBI" id="CHEBI:15377"/>
        <dbReference type="ChEBI" id="CHEBI:15636"/>
        <dbReference type="ChEBI" id="CHEBI:57453"/>
        <dbReference type="EC" id="2.1.2.11"/>
    </reaction>
</comment>
<comment type="cofactor">
    <cofactor evidence="1">
        <name>Mg(2+)</name>
        <dbReference type="ChEBI" id="CHEBI:18420"/>
    </cofactor>
    <text evidence="1">Binds 1 Mg(2+) ion per subunit.</text>
</comment>
<comment type="pathway">
    <text evidence="1">Cofactor biosynthesis; (R)-pantothenate biosynthesis; (R)-pantoate from 3-methyl-2-oxobutanoate: step 1/2.</text>
</comment>
<comment type="subunit">
    <text evidence="1">Homodecamer; pentamer of dimers.</text>
</comment>
<comment type="subcellular location">
    <subcellularLocation>
        <location evidence="1">Cytoplasm</location>
    </subcellularLocation>
</comment>
<comment type="similarity">
    <text evidence="1">Belongs to the PanB family.</text>
</comment>
<reference key="1">
    <citation type="journal article" date="2005" name="J. Bacteriol.">
        <title>Insights on evolution of virulence and resistance from the complete genome analysis of an early methicillin-resistant Staphylococcus aureus strain and a biofilm-producing methicillin-resistant Staphylococcus epidermidis strain.</title>
        <authorList>
            <person name="Gill S.R."/>
            <person name="Fouts D.E."/>
            <person name="Archer G.L."/>
            <person name="Mongodin E.F."/>
            <person name="DeBoy R.T."/>
            <person name="Ravel J."/>
            <person name="Paulsen I.T."/>
            <person name="Kolonay J.F."/>
            <person name="Brinkac L.M."/>
            <person name="Beanan M.J."/>
            <person name="Dodson R.J."/>
            <person name="Daugherty S.C."/>
            <person name="Madupu R."/>
            <person name="Angiuoli S.V."/>
            <person name="Durkin A.S."/>
            <person name="Haft D.H."/>
            <person name="Vamathevan J.J."/>
            <person name="Khouri H."/>
            <person name="Utterback T.R."/>
            <person name="Lee C."/>
            <person name="Dimitrov G."/>
            <person name="Jiang L."/>
            <person name="Qin H."/>
            <person name="Weidman J."/>
            <person name="Tran K."/>
            <person name="Kang K.H."/>
            <person name="Hance I.R."/>
            <person name="Nelson K.E."/>
            <person name="Fraser C.M."/>
        </authorList>
    </citation>
    <scope>NUCLEOTIDE SEQUENCE [LARGE SCALE GENOMIC DNA]</scope>
    <source>
        <strain>COL</strain>
    </source>
</reference>
<gene>
    <name evidence="1" type="primary">panB</name>
    <name type="ordered locus">SACOL2615</name>
</gene>
<organism>
    <name type="scientific">Staphylococcus aureus (strain COL)</name>
    <dbReference type="NCBI Taxonomy" id="93062"/>
    <lineage>
        <taxon>Bacteria</taxon>
        <taxon>Bacillati</taxon>
        <taxon>Bacillota</taxon>
        <taxon>Bacilli</taxon>
        <taxon>Bacillales</taxon>
        <taxon>Staphylococcaceae</taxon>
        <taxon>Staphylococcus</taxon>
    </lineage>
</organism>
<evidence type="ECO:0000255" key="1">
    <source>
        <dbReference type="HAMAP-Rule" id="MF_00156"/>
    </source>
</evidence>
<name>PANB_STAAC</name>